<evidence type="ECO:0000250" key="1"/>
<evidence type="ECO:0000255" key="2"/>
<evidence type="ECO:0000269" key="3">
    <source>
    </source>
</evidence>
<evidence type="ECO:0000305" key="4"/>
<evidence type="ECO:0007829" key="5">
    <source>
        <dbReference type="PDB" id="1XV3"/>
    </source>
</evidence>
<accession>Q962A7</accession>
<name>PEN4D_PENST</name>
<keyword id="KW-0002">3D-structure</keyword>
<keyword id="KW-0027">Amidation</keyword>
<keyword id="KW-0044">Antibiotic</keyword>
<keyword id="KW-0929">Antimicrobial</keyword>
<keyword id="KW-0147">Chitin-binding</keyword>
<keyword id="KW-1015">Disulfide bond</keyword>
<keyword id="KW-0295">Fungicide</keyword>
<keyword id="KW-0732">Signal</keyword>
<proteinExistence type="evidence at protein level"/>
<dbReference type="EMBL" id="AY039207">
    <property type="protein sequence ID" value="AAK83455.1"/>
    <property type="molecule type" value="mRNA"/>
</dbReference>
<dbReference type="PDB" id="1XV3">
    <property type="method" value="NMR"/>
    <property type="chains" value="A=20-66"/>
</dbReference>
<dbReference type="PDBsum" id="1XV3"/>
<dbReference type="SMR" id="Q962A7"/>
<dbReference type="EvolutionaryTrace" id="Q962A7"/>
<dbReference type="GO" id="GO:0005737">
    <property type="term" value="C:cytoplasm"/>
    <property type="evidence" value="ECO:0007669"/>
    <property type="project" value="InterPro"/>
</dbReference>
<dbReference type="GO" id="GO:0008061">
    <property type="term" value="F:chitin binding"/>
    <property type="evidence" value="ECO:0007669"/>
    <property type="project" value="UniProtKB-KW"/>
</dbReference>
<dbReference type="GO" id="GO:0042742">
    <property type="term" value="P:defense response to bacterium"/>
    <property type="evidence" value="ECO:0007669"/>
    <property type="project" value="UniProtKB-KW"/>
</dbReference>
<dbReference type="GO" id="GO:0050832">
    <property type="term" value="P:defense response to fungus"/>
    <property type="evidence" value="ECO:0007669"/>
    <property type="project" value="UniProtKB-KW"/>
</dbReference>
<dbReference type="GO" id="GO:0031640">
    <property type="term" value="P:killing of cells of another organism"/>
    <property type="evidence" value="ECO:0007669"/>
    <property type="project" value="UniProtKB-KW"/>
</dbReference>
<dbReference type="InterPro" id="IPR009226">
    <property type="entry name" value="Penaeidin"/>
</dbReference>
<dbReference type="Pfam" id="PF05927">
    <property type="entry name" value="Penaeidin"/>
    <property type="match status" value="1"/>
</dbReference>
<feature type="signal peptide" evidence="2">
    <location>
        <begin position="1"/>
        <end position="19"/>
    </location>
</feature>
<feature type="chain" id="PRO_0000023522" description="Penaeidin-4d">
    <location>
        <begin position="20"/>
        <end position="66"/>
    </location>
</feature>
<feature type="modified residue" description="Leucine amide" evidence="1">
    <location>
        <position position="66"/>
    </location>
</feature>
<feature type="disulfide bond" evidence="3">
    <location>
        <begin position="42"/>
        <end position="56"/>
    </location>
</feature>
<feature type="disulfide bond" evidence="3">
    <location>
        <begin position="45"/>
        <end position="63"/>
    </location>
</feature>
<feature type="disulfide bond" evidence="3">
    <location>
        <begin position="57"/>
        <end position="64"/>
    </location>
</feature>
<feature type="turn" evidence="5">
    <location>
        <begin position="45"/>
        <end position="47"/>
    </location>
</feature>
<feature type="helix" evidence="5">
    <location>
        <begin position="50"/>
        <end position="58"/>
    </location>
</feature>
<sequence>MRLLVCLVFLASFAMVCQGHSSGYTRPLRKPSRPIFIRPIGCDVCYGIPSSTARLCCFRYGDCCHLG</sequence>
<reference key="1">
    <citation type="journal article" date="2002" name="Immunogenetics">
        <title>Diversity of the penaeidin antimicrobial peptides in two shrimp species.</title>
        <authorList>
            <person name="Cuthbertson B.J."/>
            <person name="Shepard E.F."/>
            <person name="Chapman R.W."/>
            <person name="Gross P.S."/>
        </authorList>
    </citation>
    <scope>NUCLEOTIDE SEQUENCE [MRNA]</scope>
    <source>
        <tissue>Hemocyte</tissue>
    </source>
</reference>
<reference key="2">
    <citation type="journal article" date="2005" name="J. Biol. Chem.">
        <title>Solution structure of synthetic penaeidin-4 with structural and functional comparisons with penaeidin-3.</title>
        <authorList>
            <person name="Cuthbertson B.J."/>
            <person name="Yang Y."/>
            <person name="Bachere E."/>
            <person name="Bullesbach E.E."/>
            <person name="Gross P.S."/>
            <person name="Aumelas A."/>
        </authorList>
    </citation>
    <scope>STRUCTURE BY NMR OF 20-66</scope>
    <scope>DISULFIDE BONDS</scope>
</reference>
<organism>
    <name type="scientific">Penaeus setiferus</name>
    <name type="common">Atlantic white shrimp</name>
    <name type="synonym">Litopenaeus setiferus</name>
    <dbReference type="NCBI Taxonomy" id="64468"/>
    <lineage>
        <taxon>Eukaryota</taxon>
        <taxon>Metazoa</taxon>
        <taxon>Ecdysozoa</taxon>
        <taxon>Arthropoda</taxon>
        <taxon>Crustacea</taxon>
        <taxon>Multicrustacea</taxon>
        <taxon>Malacostraca</taxon>
        <taxon>Eumalacostraca</taxon>
        <taxon>Eucarida</taxon>
        <taxon>Decapoda</taxon>
        <taxon>Dendrobranchiata</taxon>
        <taxon>Penaeoidea</taxon>
        <taxon>Penaeidae</taxon>
        <taxon>Penaeus</taxon>
    </lineage>
</organism>
<protein>
    <recommendedName>
        <fullName>Penaeidin-4d</fullName>
        <shortName>Pen-4d</shortName>
    </recommendedName>
</protein>
<comment type="function">
    <text evidence="1">Antibacterial and antifungal activity. Presents chitin-binding activity (By similarity).</text>
</comment>
<comment type="subcellular location">
    <subcellularLocation>
        <location>Cytoplasmic granule</location>
    </subcellularLocation>
    <text>Cytoplasmic granules of hemocytes and to a lesser extent in small granules of hemocytes.</text>
</comment>
<comment type="similarity">
    <text evidence="4">Belongs to the penaeidin family.</text>
</comment>